<protein>
    <recommendedName>
        <fullName evidence="1">Glycine--tRNA ligase</fullName>
        <ecNumber evidence="1">6.1.1.14</ecNumber>
    </recommendedName>
    <alternativeName>
        <fullName evidence="1">Glycyl-tRNA synthetase</fullName>
        <shortName evidence="1">GlyRS</shortName>
    </alternativeName>
</protein>
<accession>C4Z1I4</accession>
<proteinExistence type="inferred from homology"/>
<feature type="chain" id="PRO_1000204580" description="Glycine--tRNA ligase">
    <location>
        <begin position="1"/>
        <end position="462"/>
    </location>
</feature>
<feature type="binding site" evidence="1">
    <location>
        <position position="98"/>
    </location>
    <ligand>
        <name>substrate</name>
    </ligand>
</feature>
<feature type="binding site" evidence="1">
    <location>
        <position position="174"/>
    </location>
    <ligand>
        <name>substrate</name>
    </ligand>
</feature>
<feature type="binding site" evidence="1">
    <location>
        <begin position="206"/>
        <end position="208"/>
    </location>
    <ligand>
        <name>ATP</name>
        <dbReference type="ChEBI" id="CHEBI:30616"/>
    </ligand>
</feature>
<feature type="binding site" evidence="1">
    <location>
        <begin position="216"/>
        <end position="221"/>
    </location>
    <ligand>
        <name>ATP</name>
        <dbReference type="ChEBI" id="CHEBI:30616"/>
    </ligand>
</feature>
<feature type="binding site" evidence="1">
    <location>
        <begin position="221"/>
        <end position="225"/>
    </location>
    <ligand>
        <name>substrate</name>
    </ligand>
</feature>
<feature type="binding site" evidence="1">
    <location>
        <begin position="290"/>
        <end position="291"/>
    </location>
    <ligand>
        <name>ATP</name>
        <dbReference type="ChEBI" id="CHEBI:30616"/>
    </ligand>
</feature>
<feature type="binding site" evidence="1">
    <location>
        <begin position="330"/>
        <end position="334"/>
    </location>
    <ligand>
        <name>substrate</name>
    </ligand>
</feature>
<feature type="binding site" evidence="1">
    <location>
        <begin position="334"/>
        <end position="337"/>
    </location>
    <ligand>
        <name>ATP</name>
        <dbReference type="ChEBI" id="CHEBI:30616"/>
    </ligand>
</feature>
<reference key="1">
    <citation type="journal article" date="2009" name="Proc. Natl. Acad. Sci. U.S.A.">
        <title>Characterizing a model human gut microbiota composed of members of its two dominant bacterial phyla.</title>
        <authorList>
            <person name="Mahowald M.A."/>
            <person name="Rey F.E."/>
            <person name="Seedorf H."/>
            <person name="Turnbaugh P.J."/>
            <person name="Fulton R.S."/>
            <person name="Wollam A."/>
            <person name="Shah N."/>
            <person name="Wang C."/>
            <person name="Magrini V."/>
            <person name="Wilson R.K."/>
            <person name="Cantarel B.L."/>
            <person name="Coutinho P.M."/>
            <person name="Henrissat B."/>
            <person name="Crock L.W."/>
            <person name="Russell A."/>
            <person name="Verberkmoes N.C."/>
            <person name="Hettich R.L."/>
            <person name="Gordon J.I."/>
        </authorList>
    </citation>
    <scope>NUCLEOTIDE SEQUENCE [LARGE SCALE GENOMIC DNA]</scope>
    <source>
        <strain>ATCC 27750 / DSM 3376 / VPI C15-48 / C15-B4</strain>
    </source>
</reference>
<sequence>MEKTMEKIVSLAKARGFVYPGSEIYGGLANTWDYGNLGVELKNNVKKAWWQKFVQESPYNVGVDCAILMNPQTWVASGHLGGFSDPLMDCKECHERFRADKLIEDWADENSYDLGGSVDGWTQEQMKNFIDEKNICCPSCGKHNFTDIRQFNLMFKTFQGVTEDAKNTVYLRPETAQGIFVNFKNVQRTSRKKVPFGIGQIGKSFRNEITPGNFTFRTREFEQMELEFFCKPGTDLEWFTYWRQYCIDWLKALGIKEDEMRARDHSPEELCFYSKGTTDIEFLFPFGWGELWGIADRTDYDLTQHQTVSGEDMSYFDDEAKEKYIPYVIEPSLGADRVTLAFLCSAYDEEELEGGDVRTVLHFHPAIAPVKIGILPLSKKLNEGAEKVYAELSKYYNCEFDDRGNIGKRYRRQDEIGTPFCITYDFDSEEDGAVTVRDRDTMQQERIKIADLKAYFEDKFRF</sequence>
<name>SYG_LACE2</name>
<evidence type="ECO:0000255" key="1">
    <source>
        <dbReference type="HAMAP-Rule" id="MF_00253"/>
    </source>
</evidence>
<comment type="function">
    <text evidence="1">Catalyzes the attachment of glycine to tRNA(Gly).</text>
</comment>
<comment type="catalytic activity">
    <reaction evidence="1">
        <text>tRNA(Gly) + glycine + ATP = glycyl-tRNA(Gly) + AMP + diphosphate</text>
        <dbReference type="Rhea" id="RHEA:16013"/>
        <dbReference type="Rhea" id="RHEA-COMP:9664"/>
        <dbReference type="Rhea" id="RHEA-COMP:9683"/>
        <dbReference type="ChEBI" id="CHEBI:30616"/>
        <dbReference type="ChEBI" id="CHEBI:33019"/>
        <dbReference type="ChEBI" id="CHEBI:57305"/>
        <dbReference type="ChEBI" id="CHEBI:78442"/>
        <dbReference type="ChEBI" id="CHEBI:78522"/>
        <dbReference type="ChEBI" id="CHEBI:456215"/>
        <dbReference type="EC" id="6.1.1.14"/>
    </reaction>
</comment>
<comment type="subunit">
    <text evidence="1">Homodimer.</text>
</comment>
<comment type="subcellular location">
    <subcellularLocation>
        <location evidence="1">Cytoplasm</location>
    </subcellularLocation>
</comment>
<comment type="similarity">
    <text evidence="1">Belongs to the class-II aminoacyl-tRNA synthetase family.</text>
</comment>
<gene>
    <name evidence="1" type="primary">glyQS</name>
    <name type="ordered locus">EUBELI_01350</name>
</gene>
<organism>
    <name type="scientific">Lachnospira eligens (strain ATCC 27750 / DSM 3376 / VPI C15-48 / C15-B4)</name>
    <name type="common">Eubacterium eligens</name>
    <dbReference type="NCBI Taxonomy" id="515620"/>
    <lineage>
        <taxon>Bacteria</taxon>
        <taxon>Bacillati</taxon>
        <taxon>Bacillota</taxon>
        <taxon>Clostridia</taxon>
        <taxon>Lachnospirales</taxon>
        <taxon>Lachnospiraceae</taxon>
        <taxon>Lachnospira</taxon>
    </lineage>
</organism>
<keyword id="KW-0030">Aminoacyl-tRNA synthetase</keyword>
<keyword id="KW-0067">ATP-binding</keyword>
<keyword id="KW-0963">Cytoplasm</keyword>
<keyword id="KW-0436">Ligase</keyword>
<keyword id="KW-0547">Nucleotide-binding</keyword>
<keyword id="KW-0648">Protein biosynthesis</keyword>
<keyword id="KW-1185">Reference proteome</keyword>
<dbReference type="EC" id="6.1.1.14" evidence="1"/>
<dbReference type="EMBL" id="CP001104">
    <property type="protein sequence ID" value="ACR72345.1"/>
    <property type="molecule type" value="Genomic_DNA"/>
</dbReference>
<dbReference type="RefSeq" id="WP_012739580.1">
    <property type="nucleotide sequence ID" value="NC_012778.1"/>
</dbReference>
<dbReference type="SMR" id="C4Z1I4"/>
<dbReference type="STRING" id="515620.EUBELI_01350"/>
<dbReference type="GeneID" id="41356061"/>
<dbReference type="KEGG" id="eel:EUBELI_01350"/>
<dbReference type="eggNOG" id="COG0423">
    <property type="taxonomic scope" value="Bacteria"/>
</dbReference>
<dbReference type="HOGENOM" id="CLU_015515_2_1_9"/>
<dbReference type="Proteomes" id="UP000001476">
    <property type="component" value="Chromosome"/>
</dbReference>
<dbReference type="GO" id="GO:0005737">
    <property type="term" value="C:cytoplasm"/>
    <property type="evidence" value="ECO:0007669"/>
    <property type="project" value="UniProtKB-SubCell"/>
</dbReference>
<dbReference type="GO" id="GO:0005524">
    <property type="term" value="F:ATP binding"/>
    <property type="evidence" value="ECO:0007669"/>
    <property type="project" value="UniProtKB-UniRule"/>
</dbReference>
<dbReference type="GO" id="GO:0140096">
    <property type="term" value="F:catalytic activity, acting on a protein"/>
    <property type="evidence" value="ECO:0007669"/>
    <property type="project" value="UniProtKB-ARBA"/>
</dbReference>
<dbReference type="GO" id="GO:0004820">
    <property type="term" value="F:glycine-tRNA ligase activity"/>
    <property type="evidence" value="ECO:0000250"/>
    <property type="project" value="UniProtKB"/>
</dbReference>
<dbReference type="GO" id="GO:0046983">
    <property type="term" value="F:protein dimerization activity"/>
    <property type="evidence" value="ECO:0000250"/>
    <property type="project" value="UniProtKB"/>
</dbReference>
<dbReference type="GO" id="GO:0016740">
    <property type="term" value="F:transferase activity"/>
    <property type="evidence" value="ECO:0007669"/>
    <property type="project" value="UniProtKB-ARBA"/>
</dbReference>
<dbReference type="GO" id="GO:0006426">
    <property type="term" value="P:glycyl-tRNA aminoacylation"/>
    <property type="evidence" value="ECO:0007669"/>
    <property type="project" value="UniProtKB-UniRule"/>
</dbReference>
<dbReference type="CDD" id="cd00774">
    <property type="entry name" value="GlyRS-like_core"/>
    <property type="match status" value="1"/>
</dbReference>
<dbReference type="CDD" id="cd00858">
    <property type="entry name" value="GlyRS_anticodon"/>
    <property type="match status" value="1"/>
</dbReference>
<dbReference type="FunFam" id="3.40.50.800:FF:000002">
    <property type="entry name" value="Glycine--tRNA ligase"/>
    <property type="match status" value="1"/>
</dbReference>
<dbReference type="Gene3D" id="3.40.50.800">
    <property type="entry name" value="Anticodon-binding domain"/>
    <property type="match status" value="1"/>
</dbReference>
<dbReference type="Gene3D" id="3.30.930.10">
    <property type="entry name" value="Bira Bifunctional Protein, Domain 2"/>
    <property type="match status" value="1"/>
</dbReference>
<dbReference type="HAMAP" id="MF_00253_B">
    <property type="entry name" value="Gly_tRNA_synth_B"/>
    <property type="match status" value="1"/>
</dbReference>
<dbReference type="InterPro" id="IPR002314">
    <property type="entry name" value="aa-tRNA-synt_IIb"/>
</dbReference>
<dbReference type="InterPro" id="IPR006195">
    <property type="entry name" value="aa-tRNA-synth_II"/>
</dbReference>
<dbReference type="InterPro" id="IPR045864">
    <property type="entry name" value="aa-tRNA-synth_II/BPL/LPL"/>
</dbReference>
<dbReference type="InterPro" id="IPR004154">
    <property type="entry name" value="Anticodon-bd"/>
</dbReference>
<dbReference type="InterPro" id="IPR036621">
    <property type="entry name" value="Anticodon-bd_dom_sf"/>
</dbReference>
<dbReference type="InterPro" id="IPR027031">
    <property type="entry name" value="Gly-tRNA_synthase/POLG2"/>
</dbReference>
<dbReference type="InterPro" id="IPR022961">
    <property type="entry name" value="Gly_tRNA_ligase_bac"/>
</dbReference>
<dbReference type="InterPro" id="IPR033731">
    <property type="entry name" value="GlyRS-like_core"/>
</dbReference>
<dbReference type="InterPro" id="IPR002315">
    <property type="entry name" value="tRNA-synt_gly"/>
</dbReference>
<dbReference type="NCBIfam" id="TIGR00389">
    <property type="entry name" value="glyS_dimeric"/>
    <property type="match status" value="1"/>
</dbReference>
<dbReference type="NCBIfam" id="NF003211">
    <property type="entry name" value="PRK04173.1"/>
    <property type="match status" value="1"/>
</dbReference>
<dbReference type="PANTHER" id="PTHR10745:SF8">
    <property type="entry name" value="DNA POLYMERASE SUBUNIT GAMMA-2, MITOCHONDRIAL"/>
    <property type="match status" value="1"/>
</dbReference>
<dbReference type="PANTHER" id="PTHR10745">
    <property type="entry name" value="GLYCYL-TRNA SYNTHETASE/DNA POLYMERASE SUBUNIT GAMMA-2"/>
    <property type="match status" value="1"/>
</dbReference>
<dbReference type="Pfam" id="PF03129">
    <property type="entry name" value="HGTP_anticodon"/>
    <property type="match status" value="1"/>
</dbReference>
<dbReference type="Pfam" id="PF00587">
    <property type="entry name" value="tRNA-synt_2b"/>
    <property type="match status" value="1"/>
</dbReference>
<dbReference type="PRINTS" id="PR01043">
    <property type="entry name" value="TRNASYNTHGLY"/>
</dbReference>
<dbReference type="SUPFAM" id="SSF52954">
    <property type="entry name" value="Class II aaRS ABD-related"/>
    <property type="match status" value="1"/>
</dbReference>
<dbReference type="SUPFAM" id="SSF55681">
    <property type="entry name" value="Class II aaRS and biotin synthetases"/>
    <property type="match status" value="1"/>
</dbReference>
<dbReference type="PROSITE" id="PS50862">
    <property type="entry name" value="AA_TRNA_LIGASE_II"/>
    <property type="match status" value="1"/>
</dbReference>